<dbReference type="EC" id="1.1.1.17" evidence="1"/>
<dbReference type="EMBL" id="CP000626">
    <property type="protein sequence ID" value="ABQ18635.1"/>
    <property type="molecule type" value="Genomic_DNA"/>
</dbReference>
<dbReference type="EMBL" id="CP001236">
    <property type="protein sequence ID" value="ACP11899.1"/>
    <property type="molecule type" value="Genomic_DNA"/>
</dbReference>
<dbReference type="RefSeq" id="WP_000739122.1">
    <property type="nucleotide sequence ID" value="NZ_JAACZH010000003.1"/>
</dbReference>
<dbReference type="SMR" id="A5F155"/>
<dbReference type="KEGG" id="vco:VC0395_0195"/>
<dbReference type="KEGG" id="vcr:VC395_A1069"/>
<dbReference type="PATRIC" id="fig|345073.21.peg.3792"/>
<dbReference type="eggNOG" id="COG0246">
    <property type="taxonomic scope" value="Bacteria"/>
</dbReference>
<dbReference type="HOGENOM" id="CLU_036089_2_0_6"/>
<dbReference type="OrthoDB" id="271711at2"/>
<dbReference type="Proteomes" id="UP000000249">
    <property type="component" value="Chromosome 1"/>
</dbReference>
<dbReference type="GO" id="GO:0005829">
    <property type="term" value="C:cytosol"/>
    <property type="evidence" value="ECO:0007669"/>
    <property type="project" value="TreeGrafter"/>
</dbReference>
<dbReference type="GO" id="GO:0008926">
    <property type="term" value="F:mannitol-1-phosphate 5-dehydrogenase activity"/>
    <property type="evidence" value="ECO:0007669"/>
    <property type="project" value="UniProtKB-UniRule"/>
</dbReference>
<dbReference type="GO" id="GO:0019592">
    <property type="term" value="P:mannitol catabolic process"/>
    <property type="evidence" value="ECO:0007669"/>
    <property type="project" value="TreeGrafter"/>
</dbReference>
<dbReference type="FunFam" id="1.10.1040.10:FF:000009">
    <property type="entry name" value="Mannitol-1-phosphate 5-dehydrogenase"/>
    <property type="match status" value="1"/>
</dbReference>
<dbReference type="FunFam" id="3.40.50.720:FF:000075">
    <property type="entry name" value="Mannitol-1-phosphate 5-dehydrogenase"/>
    <property type="match status" value="1"/>
</dbReference>
<dbReference type="Gene3D" id="1.10.1040.10">
    <property type="entry name" value="N-(1-d-carboxylethyl)-l-norvaline Dehydrogenase, domain 2"/>
    <property type="match status" value="1"/>
</dbReference>
<dbReference type="Gene3D" id="3.40.50.720">
    <property type="entry name" value="NAD(P)-binding Rossmann-like Domain"/>
    <property type="match status" value="1"/>
</dbReference>
<dbReference type="HAMAP" id="MF_00196">
    <property type="entry name" value="Mannitol_dehydrog"/>
    <property type="match status" value="1"/>
</dbReference>
<dbReference type="InterPro" id="IPR008927">
    <property type="entry name" value="6-PGluconate_DH-like_C_sf"/>
</dbReference>
<dbReference type="InterPro" id="IPR013328">
    <property type="entry name" value="6PGD_dom2"/>
</dbReference>
<dbReference type="InterPro" id="IPR023028">
    <property type="entry name" value="Mannitol_1_phos_5_DH"/>
</dbReference>
<dbReference type="InterPro" id="IPR000669">
    <property type="entry name" value="Mannitol_DH"/>
</dbReference>
<dbReference type="InterPro" id="IPR013118">
    <property type="entry name" value="Mannitol_DH_C"/>
</dbReference>
<dbReference type="InterPro" id="IPR023027">
    <property type="entry name" value="Mannitol_DH_CS"/>
</dbReference>
<dbReference type="InterPro" id="IPR013131">
    <property type="entry name" value="Mannitol_DH_N"/>
</dbReference>
<dbReference type="InterPro" id="IPR036291">
    <property type="entry name" value="NAD(P)-bd_dom_sf"/>
</dbReference>
<dbReference type="NCBIfam" id="NF002646">
    <property type="entry name" value="PRK02318.1-2"/>
    <property type="match status" value="1"/>
</dbReference>
<dbReference type="NCBIfam" id="NF002647">
    <property type="entry name" value="PRK02318.1-3"/>
    <property type="match status" value="1"/>
</dbReference>
<dbReference type="NCBIfam" id="NF002650">
    <property type="entry name" value="PRK02318.2-2"/>
    <property type="match status" value="1"/>
</dbReference>
<dbReference type="NCBIfam" id="NF002652">
    <property type="entry name" value="PRK02318.2-5"/>
    <property type="match status" value="1"/>
</dbReference>
<dbReference type="PANTHER" id="PTHR30524:SF0">
    <property type="entry name" value="ALTRONATE OXIDOREDUCTASE-RELATED"/>
    <property type="match status" value="1"/>
</dbReference>
<dbReference type="PANTHER" id="PTHR30524">
    <property type="entry name" value="MANNITOL-1-PHOSPHATE 5-DEHYDROGENASE"/>
    <property type="match status" value="1"/>
</dbReference>
<dbReference type="Pfam" id="PF01232">
    <property type="entry name" value="Mannitol_dh"/>
    <property type="match status" value="1"/>
</dbReference>
<dbReference type="Pfam" id="PF08125">
    <property type="entry name" value="Mannitol_dh_C"/>
    <property type="match status" value="1"/>
</dbReference>
<dbReference type="PRINTS" id="PR00084">
    <property type="entry name" value="MTLDHDRGNASE"/>
</dbReference>
<dbReference type="SUPFAM" id="SSF48179">
    <property type="entry name" value="6-phosphogluconate dehydrogenase C-terminal domain-like"/>
    <property type="match status" value="1"/>
</dbReference>
<dbReference type="SUPFAM" id="SSF51735">
    <property type="entry name" value="NAD(P)-binding Rossmann-fold domains"/>
    <property type="match status" value="1"/>
</dbReference>
<dbReference type="PROSITE" id="PS00974">
    <property type="entry name" value="MANNITOL_DHGENASE"/>
    <property type="match status" value="1"/>
</dbReference>
<evidence type="ECO:0000255" key="1">
    <source>
        <dbReference type="HAMAP-Rule" id="MF_00196"/>
    </source>
</evidence>
<gene>
    <name evidence="1" type="primary">mtlD</name>
    <name type="ordered locus">VC0395_0195</name>
    <name type="ordered locus">VC395_A1069</name>
</gene>
<proteinExistence type="inferred from homology"/>
<comment type="catalytic activity">
    <reaction evidence="1">
        <text>D-mannitol 1-phosphate + NAD(+) = beta-D-fructose 6-phosphate + NADH + H(+)</text>
        <dbReference type="Rhea" id="RHEA:19661"/>
        <dbReference type="ChEBI" id="CHEBI:15378"/>
        <dbReference type="ChEBI" id="CHEBI:57540"/>
        <dbReference type="ChEBI" id="CHEBI:57634"/>
        <dbReference type="ChEBI" id="CHEBI:57945"/>
        <dbReference type="ChEBI" id="CHEBI:61381"/>
        <dbReference type="EC" id="1.1.1.17"/>
    </reaction>
</comment>
<comment type="similarity">
    <text evidence="1">Belongs to the mannitol dehydrogenase family.</text>
</comment>
<keyword id="KW-0520">NAD</keyword>
<keyword id="KW-0560">Oxidoreductase</keyword>
<protein>
    <recommendedName>
        <fullName evidence="1">Mannitol-1-phosphate 5-dehydrogenase</fullName>
        <ecNumber evidence="1">1.1.1.17</ecNumber>
    </recommendedName>
</protein>
<feature type="chain" id="PRO_1000071712" description="Mannitol-1-phosphate 5-dehydrogenase">
    <location>
        <begin position="1"/>
        <end position="384"/>
    </location>
</feature>
<feature type="binding site" evidence="1">
    <location>
        <begin position="5"/>
        <end position="16"/>
    </location>
    <ligand>
        <name>NAD(+)</name>
        <dbReference type="ChEBI" id="CHEBI:57540"/>
    </ligand>
</feature>
<name>MTLD_VIBC3</name>
<accession>A5F155</accession>
<accession>C3M6Y6</accession>
<reference key="1">
    <citation type="submission" date="2007-03" db="EMBL/GenBank/DDBJ databases">
        <authorList>
            <person name="Heidelberg J."/>
        </authorList>
    </citation>
    <scope>NUCLEOTIDE SEQUENCE [LARGE SCALE GENOMIC DNA]</scope>
    <source>
        <strain>ATCC 39541 / Classical Ogawa 395 / O395</strain>
    </source>
</reference>
<reference key="2">
    <citation type="journal article" date="2008" name="PLoS ONE">
        <title>A recalibrated molecular clock and independent origins for the cholera pandemic clones.</title>
        <authorList>
            <person name="Feng L."/>
            <person name="Reeves P.R."/>
            <person name="Lan R."/>
            <person name="Ren Y."/>
            <person name="Gao C."/>
            <person name="Zhou Z."/>
            <person name="Ren Y."/>
            <person name="Cheng J."/>
            <person name="Wang W."/>
            <person name="Wang J."/>
            <person name="Qian W."/>
            <person name="Li D."/>
            <person name="Wang L."/>
        </authorList>
    </citation>
    <scope>NUCLEOTIDE SEQUENCE [LARGE SCALE GENOMIC DNA]</scope>
    <source>
        <strain>ATCC 39541 / Classical Ogawa 395 / O395</strain>
    </source>
</reference>
<sequence length="384" mass="42340">MKKNAVHFGAGNIGRGFIGKLLADADIAVTFADVNEPLVDQLSHQQEYKVKVVGSECKMETVSHVTAVNSASEALIERIIKTDLVTTAVGPTVLDIIAKTIAKGLSARFAAGNTQPLNIIACENMVRGTTHLKQQVYQFLTTEEQQQADALVGFVDSAVDRIVPPLQAANDDPLEVTVESFSEWIVDEQQFKGEIPQIEGMEKTDNLMAFVERKLFTLNTGHCVTAYLGCLKGHRTIREAIEDPCIHAQVKQAMQESGEVLIRRYGFDRALHSAYIEKILSRFANPYLVDEVDRVGRQPLRKLSANDRLIKPLLGTIEYGLPNGMLLKGIAAALKYRNSSDPQAVELQQSIEKEGVRSTLARYTGLAAESVEAQQIEALYQQMD</sequence>
<organism>
    <name type="scientific">Vibrio cholerae serotype O1 (strain ATCC 39541 / Classical Ogawa 395 / O395)</name>
    <dbReference type="NCBI Taxonomy" id="345073"/>
    <lineage>
        <taxon>Bacteria</taxon>
        <taxon>Pseudomonadati</taxon>
        <taxon>Pseudomonadota</taxon>
        <taxon>Gammaproteobacteria</taxon>
        <taxon>Vibrionales</taxon>
        <taxon>Vibrionaceae</taxon>
        <taxon>Vibrio</taxon>
    </lineage>
</organism>